<keyword id="KW-1185">Reference proteome</keyword>
<proteinExistence type="predicted"/>
<organism>
    <name type="scientific">Caenorhabditis elegans</name>
    <dbReference type="NCBI Taxonomy" id="6239"/>
    <lineage>
        <taxon>Eukaryota</taxon>
        <taxon>Metazoa</taxon>
        <taxon>Ecdysozoa</taxon>
        <taxon>Nematoda</taxon>
        <taxon>Chromadorea</taxon>
        <taxon>Rhabditida</taxon>
        <taxon>Rhabditina</taxon>
        <taxon>Rhabditomorpha</taxon>
        <taxon>Rhabditoidea</taxon>
        <taxon>Rhabditidae</taxon>
        <taxon>Peloderinae</taxon>
        <taxon>Caenorhabditis</taxon>
    </lineage>
</organism>
<accession>P45965</accession>
<dbReference type="EMBL" id="Z36753">
    <property type="protein sequence ID" value="CAA85333.1"/>
    <property type="molecule type" value="Genomic_DNA"/>
</dbReference>
<dbReference type="PIR" id="T24719">
    <property type="entry name" value="T24719"/>
</dbReference>
<dbReference type="RefSeq" id="NP_495649.1">
    <property type="nucleotide sequence ID" value="NM_063248.6"/>
</dbReference>
<dbReference type="SMR" id="P45965"/>
<dbReference type="BioGRID" id="39596">
    <property type="interactions" value="2"/>
</dbReference>
<dbReference type="FunCoup" id="P45965">
    <property type="interactions" value="143"/>
</dbReference>
<dbReference type="STRING" id="6239.T09A5.5.1"/>
<dbReference type="PaxDb" id="6239-T09A5.5"/>
<dbReference type="PeptideAtlas" id="P45965"/>
<dbReference type="EnsemblMetazoa" id="T09A5.5.1">
    <property type="protein sequence ID" value="T09A5.5.1"/>
    <property type="gene ID" value="WBGene00011634"/>
</dbReference>
<dbReference type="GeneID" id="174263"/>
<dbReference type="KEGG" id="cel:CELE_T09A5.5"/>
<dbReference type="UCSC" id="T09A5.5.2">
    <property type="organism name" value="c. elegans"/>
</dbReference>
<dbReference type="AGR" id="WB:WBGene00011634"/>
<dbReference type="CTD" id="174263"/>
<dbReference type="WormBase" id="T09A5.5">
    <property type="protein sequence ID" value="CE01086"/>
    <property type="gene ID" value="WBGene00011634"/>
</dbReference>
<dbReference type="eggNOG" id="ENOG502S2YY">
    <property type="taxonomic scope" value="Eukaryota"/>
</dbReference>
<dbReference type="HOGENOM" id="CLU_1572573_0_0_1"/>
<dbReference type="InParanoid" id="P45965"/>
<dbReference type="OMA" id="TIGHDVF"/>
<dbReference type="OrthoDB" id="337270at2759"/>
<dbReference type="PRO" id="PR:P45965"/>
<dbReference type="Proteomes" id="UP000001940">
    <property type="component" value="Chromosome II"/>
</dbReference>
<dbReference type="Bgee" id="WBGene00011634">
    <property type="expression patterns" value="Expressed in germ line (C elegans) and 4 other cell types or tissues"/>
</dbReference>
<dbReference type="GO" id="GO:0005739">
    <property type="term" value="C:mitochondrion"/>
    <property type="evidence" value="ECO:0007005"/>
    <property type="project" value="WormBase"/>
</dbReference>
<dbReference type="FunFam" id="3.40.30.10:FF:000532">
    <property type="entry name" value="Uncharacterized protein T09A5.5"/>
    <property type="match status" value="1"/>
</dbReference>
<dbReference type="Gene3D" id="3.40.30.10">
    <property type="entry name" value="Glutaredoxin"/>
    <property type="match status" value="1"/>
</dbReference>
<dbReference type="InterPro" id="IPR036249">
    <property type="entry name" value="Thioredoxin-like_sf"/>
</dbReference>
<dbReference type="SUPFAM" id="SSF52833">
    <property type="entry name" value="Thioredoxin-like"/>
    <property type="match status" value="1"/>
</dbReference>
<name>YNZ5_CAEEL</name>
<feature type="chain" id="PRO_0000065454" description="Uncharacterized protein T09A5.5">
    <location>
        <begin position="1"/>
        <end position="163"/>
    </location>
</feature>
<sequence length="163" mass="19352">MSVQNGFTAKIIRFVPHFVALRLSWTHNDLKAEGLEQFVEECLPAIRENNPQVKYFLQRSYTTCDPFVVGEYSWLRHRKKRVNWKSKEQVLSMIEEMSIGGDYREGYKRGVNRRLPRGQELWDTETMGHDVFHVTSKWKADIPEEDELPITAKTHPNFTYRKY</sequence>
<reference key="1">
    <citation type="journal article" date="1998" name="Science">
        <title>Genome sequence of the nematode C. elegans: a platform for investigating biology.</title>
        <authorList>
            <consortium name="The C. elegans sequencing consortium"/>
        </authorList>
    </citation>
    <scope>NUCLEOTIDE SEQUENCE [LARGE SCALE GENOMIC DNA]</scope>
    <source>
        <strain>Bristol N2</strain>
    </source>
</reference>
<gene>
    <name type="ORF">T09A5.5</name>
</gene>
<protein>
    <recommendedName>
        <fullName>Uncharacterized protein T09A5.5</fullName>
    </recommendedName>
</protein>